<reference key="1">
    <citation type="journal article" date="2008" name="BMC Genomics">
        <title>The genome of Aeromonas salmonicida subsp. salmonicida A449: insights into the evolution of a fish pathogen.</title>
        <authorList>
            <person name="Reith M.E."/>
            <person name="Singh R.K."/>
            <person name="Curtis B."/>
            <person name="Boyd J.M."/>
            <person name="Bouevitch A."/>
            <person name="Kimball J."/>
            <person name="Munholland J."/>
            <person name="Murphy C."/>
            <person name="Sarty D."/>
            <person name="Williams J."/>
            <person name="Nash J.H."/>
            <person name="Johnson S.C."/>
            <person name="Brown L.L."/>
        </authorList>
    </citation>
    <scope>NUCLEOTIDE SEQUENCE [LARGE SCALE GENOMIC DNA]</scope>
    <source>
        <strain>A449</strain>
    </source>
</reference>
<keyword id="KW-0050">Antiport</keyword>
<keyword id="KW-0997">Cell inner membrane</keyword>
<keyword id="KW-1003">Cell membrane</keyword>
<keyword id="KW-0406">Ion transport</keyword>
<keyword id="KW-0472">Membrane</keyword>
<keyword id="KW-0915">Sodium</keyword>
<keyword id="KW-0739">Sodium transport</keyword>
<keyword id="KW-0812">Transmembrane</keyword>
<keyword id="KW-1133">Transmembrane helix</keyword>
<keyword id="KW-0813">Transport</keyword>
<accession>A4SIW8</accession>
<dbReference type="EMBL" id="CP000644">
    <property type="protein sequence ID" value="ABO88840.1"/>
    <property type="molecule type" value="Genomic_DNA"/>
</dbReference>
<dbReference type="RefSeq" id="WP_011898349.1">
    <property type="nucleotide sequence ID" value="NC_009348.1"/>
</dbReference>
<dbReference type="SMR" id="A4SIW8"/>
<dbReference type="STRING" id="29491.GCA_000820065_01817"/>
<dbReference type="GeneID" id="79878215"/>
<dbReference type="KEGG" id="asa:ASA_0677"/>
<dbReference type="eggNOG" id="COG3004">
    <property type="taxonomic scope" value="Bacteria"/>
</dbReference>
<dbReference type="HOGENOM" id="CLU_015803_1_0_6"/>
<dbReference type="Proteomes" id="UP000000225">
    <property type="component" value="Chromosome"/>
</dbReference>
<dbReference type="GO" id="GO:0005886">
    <property type="term" value="C:plasma membrane"/>
    <property type="evidence" value="ECO:0007669"/>
    <property type="project" value="UniProtKB-SubCell"/>
</dbReference>
<dbReference type="GO" id="GO:0015385">
    <property type="term" value="F:sodium:proton antiporter activity"/>
    <property type="evidence" value="ECO:0007669"/>
    <property type="project" value="TreeGrafter"/>
</dbReference>
<dbReference type="GO" id="GO:0006885">
    <property type="term" value="P:regulation of pH"/>
    <property type="evidence" value="ECO:0007669"/>
    <property type="project" value="InterPro"/>
</dbReference>
<dbReference type="Gene3D" id="1.20.1530.10">
    <property type="entry name" value="Na+/H+ antiporter like domain"/>
    <property type="match status" value="1"/>
</dbReference>
<dbReference type="HAMAP" id="MF_01844">
    <property type="entry name" value="NhaA"/>
    <property type="match status" value="1"/>
</dbReference>
<dbReference type="InterPro" id="IPR023171">
    <property type="entry name" value="Na/H_antiporter_dom_sf"/>
</dbReference>
<dbReference type="InterPro" id="IPR004670">
    <property type="entry name" value="NhaA"/>
</dbReference>
<dbReference type="NCBIfam" id="TIGR00773">
    <property type="entry name" value="NhaA"/>
    <property type="match status" value="1"/>
</dbReference>
<dbReference type="NCBIfam" id="NF007111">
    <property type="entry name" value="PRK09560.1"/>
    <property type="match status" value="1"/>
</dbReference>
<dbReference type="NCBIfam" id="NF007112">
    <property type="entry name" value="PRK09561.1"/>
    <property type="match status" value="1"/>
</dbReference>
<dbReference type="PANTHER" id="PTHR30341:SF0">
    <property type="entry name" value="NA(+)_H(+) ANTIPORTER NHAA"/>
    <property type="match status" value="1"/>
</dbReference>
<dbReference type="PANTHER" id="PTHR30341">
    <property type="entry name" value="SODIUM ION/PROTON ANTIPORTER NHAA-RELATED"/>
    <property type="match status" value="1"/>
</dbReference>
<dbReference type="Pfam" id="PF06965">
    <property type="entry name" value="Na_H_antiport_1"/>
    <property type="match status" value="1"/>
</dbReference>
<protein>
    <recommendedName>
        <fullName evidence="1">Na(+)/H(+) antiporter NhaA</fullName>
    </recommendedName>
    <alternativeName>
        <fullName evidence="1">Sodium/proton antiporter NhaA</fullName>
    </alternativeName>
</protein>
<sequence length="396" mass="42178">MSDVFKKFLKLEAASGIILIMAAVLAMILANSGLASGYQAFLDTPVQVRIAALDINKPLLLWINDGFMAIFFLLVGLEVKREMLEGALSSRVQATFPAIAAVGGMLAPALIYTFFNYSDEAARAGWAIPAATDIAFALGVMALLGKRVPVSLKVFLLALAIMDDLGVIIIIALFYTQQLSLEALAVGILATLTLLWMNRRGEDRIGLYMLVGLVLWVAVLKSGVHATLAGVVVGFMIPLNGKRYASPLKHLEHALHPWSAYLILPLFAFANAGVSLDGIGLSSLLSPVPMGIMLGLFVGKPLGVFTISWLSVKLGIAQLPSGVNFKQIFAVSILCGIGFTMSMFIASLAFEHGGLDYGSYSRLGILVGSTLAAVVGYLALRMSLPNREADQSTEGL</sequence>
<gene>
    <name evidence="1" type="primary">nhaA</name>
    <name type="ordered locus">ASA_0677</name>
</gene>
<proteinExistence type="inferred from homology"/>
<evidence type="ECO:0000255" key="1">
    <source>
        <dbReference type="HAMAP-Rule" id="MF_01844"/>
    </source>
</evidence>
<comment type="function">
    <text evidence="1">Na(+)/H(+) antiporter that extrudes sodium in exchange for external protons.</text>
</comment>
<comment type="catalytic activity">
    <reaction evidence="1">
        <text>Na(+)(in) + 2 H(+)(out) = Na(+)(out) + 2 H(+)(in)</text>
        <dbReference type="Rhea" id="RHEA:29251"/>
        <dbReference type="ChEBI" id="CHEBI:15378"/>
        <dbReference type="ChEBI" id="CHEBI:29101"/>
    </reaction>
    <physiologicalReaction direction="left-to-right" evidence="1">
        <dbReference type="Rhea" id="RHEA:29252"/>
    </physiologicalReaction>
</comment>
<comment type="subcellular location">
    <subcellularLocation>
        <location evidence="1">Cell inner membrane</location>
        <topology evidence="1">Multi-pass membrane protein</topology>
    </subcellularLocation>
</comment>
<comment type="similarity">
    <text evidence="1">Belongs to the NhaA Na(+)/H(+) (TC 2.A.33) antiporter family.</text>
</comment>
<organism>
    <name type="scientific">Aeromonas salmonicida (strain A449)</name>
    <dbReference type="NCBI Taxonomy" id="382245"/>
    <lineage>
        <taxon>Bacteria</taxon>
        <taxon>Pseudomonadati</taxon>
        <taxon>Pseudomonadota</taxon>
        <taxon>Gammaproteobacteria</taxon>
        <taxon>Aeromonadales</taxon>
        <taxon>Aeromonadaceae</taxon>
        <taxon>Aeromonas</taxon>
    </lineage>
</organism>
<feature type="chain" id="PRO_0000334224" description="Na(+)/H(+) antiporter NhaA">
    <location>
        <begin position="1"/>
        <end position="396"/>
    </location>
</feature>
<feature type="transmembrane region" description="Helical" evidence="1">
    <location>
        <begin position="14"/>
        <end position="34"/>
    </location>
</feature>
<feature type="transmembrane region" description="Helical" evidence="1">
    <location>
        <begin position="59"/>
        <end position="79"/>
    </location>
</feature>
<feature type="transmembrane region" description="Helical" evidence="1">
    <location>
        <begin position="95"/>
        <end position="115"/>
    </location>
</feature>
<feature type="transmembrane region" description="Helical" evidence="1">
    <location>
        <begin position="124"/>
        <end position="144"/>
    </location>
</feature>
<feature type="transmembrane region" description="Helical" evidence="1">
    <location>
        <begin position="154"/>
        <end position="174"/>
    </location>
</feature>
<feature type="transmembrane region" description="Helical" evidence="1">
    <location>
        <begin position="178"/>
        <end position="198"/>
    </location>
</feature>
<feature type="transmembrane region" description="Helical" evidence="1">
    <location>
        <begin position="205"/>
        <end position="225"/>
    </location>
</feature>
<feature type="transmembrane region" description="Helical" evidence="1">
    <location>
        <begin position="254"/>
        <end position="274"/>
    </location>
</feature>
<feature type="transmembrane region" description="Helical" evidence="1">
    <location>
        <begin position="278"/>
        <end position="298"/>
    </location>
</feature>
<feature type="transmembrane region" description="Helical" evidence="1">
    <location>
        <begin position="328"/>
        <end position="348"/>
    </location>
</feature>
<feature type="transmembrane region" description="Helical" evidence="1">
    <location>
        <begin position="363"/>
        <end position="383"/>
    </location>
</feature>
<name>NHAA_AERS4</name>